<proteinExistence type="evidence at transcript level"/>
<organism>
    <name type="scientific">Danio rerio</name>
    <name type="common">Zebrafish</name>
    <name type="synonym">Brachydanio rerio</name>
    <dbReference type="NCBI Taxonomy" id="7955"/>
    <lineage>
        <taxon>Eukaryota</taxon>
        <taxon>Metazoa</taxon>
        <taxon>Chordata</taxon>
        <taxon>Craniata</taxon>
        <taxon>Vertebrata</taxon>
        <taxon>Euteleostomi</taxon>
        <taxon>Actinopterygii</taxon>
        <taxon>Neopterygii</taxon>
        <taxon>Teleostei</taxon>
        <taxon>Ostariophysi</taxon>
        <taxon>Cypriniformes</taxon>
        <taxon>Danionidae</taxon>
        <taxon>Danioninae</taxon>
        <taxon>Danio</taxon>
    </lineage>
</organism>
<protein>
    <recommendedName>
        <fullName>Integrator complex subunit 6</fullName>
        <shortName>Int6</shortName>
    </recommendedName>
</protein>
<feature type="chain" id="PRO_0000259545" description="Integrator complex subunit 6">
    <location>
        <begin position="1"/>
        <end position="892"/>
    </location>
</feature>
<feature type="domain" description="VWFA" evidence="2">
    <location>
        <begin position="3"/>
        <end position="227"/>
    </location>
</feature>
<feature type="region of interest" description="Disordered" evidence="3">
    <location>
        <begin position="665"/>
        <end position="692"/>
    </location>
</feature>
<feature type="region of interest" description="Disordered" evidence="3">
    <location>
        <begin position="711"/>
        <end position="754"/>
    </location>
</feature>
<feature type="region of interest" description="Disordered" evidence="3">
    <location>
        <begin position="771"/>
        <end position="793"/>
    </location>
</feature>
<feature type="short sequence motif" description="Inhibitory loop" evidence="1">
    <location>
        <begin position="630"/>
        <end position="637"/>
    </location>
</feature>
<gene>
    <name type="primary">ints6l</name>
    <name type="synonym">ints6</name>
    <name type="ORF">zgc:63527</name>
</gene>
<sequence>MPILLFLIDTSASMNQRTYLGTTYLDIAKGAVEIFMKLRARDPASRGDRYMLVTFDDPPYGVKAGWKENHATFMSELKNLQASGLTTLGHALRAAFDLLNLNRLVSGIDNYGQGRNPFFLEPSVIITITDGNKLTHSSGVAEELHLPLNSPLPGSELTKEPFRWDQRLFALVLRLPGVAVPDSEQLGSVPTDESAITQMCEVTGGRSYCVRTQRMLNQCLESLVQKVLSGVVIHFEKTGPDPPVIGEDGLVDPARPLTSFSPQPWHSCHKLIYVRPNPKTGVPVGHWPISESFWPDQNSPTLPPRSAHPVVRFSCVDCEPMVIDKLPFDKYELEPSPLTQYILERKSPHMCWQVFVNCSGKHSDVAHPFGYLKASTTLTCVNLFVMPYNYPVLLPLLDDLFKVHKLKPNLKWRQSFEMYLKSMPPYYLLPLKKALRMMGAPNLISDNMDCGLSYSVISYLKKLSQQAKIESDRLIVSVGKKPPPETGIKVKNHSNALSLAHRRDFKQLLQGITGEVPLRLIDMNFKEFAGFQIALLNKDLKPQAYRNAYDIPRRNLLDQVTRMRSNLLRTTQKLIRGQDDDSLHSIPVGQMGNYQEYLKMMPSPLREIDPDQPKRLHTFGNPFKQDKKGMMIDEADEFVTGPQNKKRGNTGDLNSGTALKRRRSMSPLLRRPQTPPIITNHVLGKGPTGTQGQQGIIKPIPLHKGAEGNNVGGTESNGERVAGTDAGDCWPGEVDGESGEPAPVEDREDAAAPDGEEEILALENCLDDRSPDHTQNCEELSPPGQEGEMEVNEGDTPAQGTIVMIPLEGSNAELRTRVIKEVRKPGRNYEAIFRLLEEVKGPVSVQRYFIHHAIKEAARFKKRMLIQQLETALEEIEDRQMLPAQINNIHSR</sequence>
<evidence type="ECO:0000250" key="1">
    <source>
        <dbReference type="UniProtKB" id="Q9UL03"/>
    </source>
</evidence>
<evidence type="ECO:0000255" key="2">
    <source>
        <dbReference type="PROSITE-ProRule" id="PRU00219"/>
    </source>
</evidence>
<evidence type="ECO:0000256" key="3">
    <source>
        <dbReference type="SAM" id="MobiDB-lite"/>
    </source>
</evidence>
<evidence type="ECO:0000305" key="4"/>
<comment type="function">
    <text evidence="1">Component of the integrator complex, a multiprotein complex that terminates RNA polymerase II (Pol II) transcription in the promoter-proximal region of genes. The integrator complex provides a quality checkpoint during transcription elongation by driving premature transcription termination of transcripts that are unfavorably configured for transcriptional elongation: the complex terminates transcription by (1) catalyzing dephosphorylation of the C-terminal domain (CTD) of Pol II subunit POLR2A/RPB1 and SUPT5H/SPT5, (2) degrading the exiting nascent RNA transcript via endonuclease activity and (3) promoting the release of Pol II from bound DNA. The integrator complex is also involved in terminating the synthesis of non-coding Pol II transcripts, such as enhancer RNAs (eRNAs), small nuclear RNAs (snRNAs), telomerase RNAs and long non-coding RNAs (lncRNAs). Within the integrator complex, INTS6 acts as a molecular adapter that promotes assembly of protein phosphatase 2A (PP2A) subunits to the integrator core complex, promoting recruitment of PP2A to transcription pause-release checkpoint.</text>
</comment>
<comment type="subunit">
    <text evidence="1">Component of the Integrator complex, composed of core subunits INTS1, INTS2, INTS3, INTS4, INTS5, INTS6, INTS7, INTS8, INTS9/RC74, INTS10, INTS11/CPSF3L, INTS12, INTS13, INTS14 and INTS15. The core complex associates with protein phosphatase 2A subunits PPP2CA and PPP2R1A, to form the Integrator-PP2A (INTAC) complex.</text>
</comment>
<comment type="subcellular location">
    <subcellularLocation>
        <location evidence="1">Nucleus</location>
    </subcellularLocation>
    <subcellularLocation>
        <location evidence="1">Chromosome</location>
    </subcellularLocation>
    <text evidence="1">Associates with chromatin and transcription pause-release checkpoint.</text>
</comment>
<comment type="domain">
    <text evidence="1">The inhibitory loop acts as a regulator of protein phosphatase 2A (PP2A) activity: Asp-633 and Glu-634 residues mimic phosphoserine and phosphothreonine residues and bind to the PP2A catalytic subunit PPP2CA active site to block substrate-binding.</text>
</comment>
<comment type="similarity">
    <text evidence="4">Belongs to the Integrator subunit 6 family.</text>
</comment>
<accession>Q7SYD9</accession>
<dbReference type="EMBL" id="BC054905">
    <property type="protein sequence ID" value="AAH54905.1"/>
    <property type="molecule type" value="mRNA"/>
</dbReference>
<dbReference type="RefSeq" id="NP_956728.1">
    <property type="nucleotide sequence ID" value="NM_200434.2"/>
</dbReference>
<dbReference type="SMR" id="Q7SYD9"/>
<dbReference type="FunCoup" id="Q7SYD9">
    <property type="interactions" value="2396"/>
</dbReference>
<dbReference type="STRING" id="7955.ENSDARP00000026435"/>
<dbReference type="PaxDb" id="7955-ENSDARP00000026435"/>
<dbReference type="GeneID" id="393406"/>
<dbReference type="KEGG" id="dre:393406"/>
<dbReference type="AGR" id="ZFIN:ZDB-GENE-040426-1150"/>
<dbReference type="CTD" id="203522"/>
<dbReference type="ZFIN" id="ZDB-GENE-040426-1150">
    <property type="gene designation" value="ints6l"/>
</dbReference>
<dbReference type="eggNOG" id="KOG3768">
    <property type="taxonomic scope" value="Eukaryota"/>
</dbReference>
<dbReference type="InParanoid" id="Q7SYD9"/>
<dbReference type="OrthoDB" id="9449012at2759"/>
<dbReference type="PhylomeDB" id="Q7SYD9"/>
<dbReference type="PRO" id="PR:Q7SYD9"/>
<dbReference type="Proteomes" id="UP000000437">
    <property type="component" value="Alternate scaffold 14"/>
</dbReference>
<dbReference type="Proteomes" id="UP000000437">
    <property type="component" value="Chromosome 14"/>
</dbReference>
<dbReference type="GO" id="GO:0000785">
    <property type="term" value="C:chromatin"/>
    <property type="evidence" value="ECO:0000250"/>
    <property type="project" value="UniProtKB"/>
</dbReference>
<dbReference type="GO" id="GO:0160232">
    <property type="term" value="C:INTAC complex"/>
    <property type="evidence" value="ECO:0000250"/>
    <property type="project" value="UniProtKB"/>
</dbReference>
<dbReference type="GO" id="GO:0032039">
    <property type="term" value="C:integrator complex"/>
    <property type="evidence" value="ECO:0000318"/>
    <property type="project" value="GO_Central"/>
</dbReference>
<dbReference type="GO" id="GO:0005634">
    <property type="term" value="C:nucleus"/>
    <property type="evidence" value="ECO:0000250"/>
    <property type="project" value="UniProtKB"/>
</dbReference>
<dbReference type="GO" id="GO:0030674">
    <property type="term" value="F:protein-macromolecule adaptor activity"/>
    <property type="evidence" value="ECO:0000250"/>
    <property type="project" value="UniProtKB"/>
</dbReference>
<dbReference type="GO" id="GO:0071168">
    <property type="term" value="P:protein localization to chromatin"/>
    <property type="evidence" value="ECO:0000250"/>
    <property type="project" value="UniProtKB"/>
</dbReference>
<dbReference type="GO" id="GO:0160240">
    <property type="term" value="P:RNA polymerase II transcription initiation surveillance"/>
    <property type="evidence" value="ECO:0000250"/>
    <property type="project" value="UniProtKB"/>
</dbReference>
<dbReference type="GO" id="GO:0034472">
    <property type="term" value="P:snRNA 3'-end processing"/>
    <property type="evidence" value="ECO:0000318"/>
    <property type="project" value="GO_Central"/>
</dbReference>
<dbReference type="CDD" id="cd00198">
    <property type="entry name" value="vWFA"/>
    <property type="match status" value="1"/>
</dbReference>
<dbReference type="FunFam" id="3.40.50.410:FF:000010">
    <property type="entry name" value="Integrator complex subunit 6 like"/>
    <property type="match status" value="1"/>
</dbReference>
<dbReference type="Gene3D" id="3.40.50.410">
    <property type="entry name" value="von Willebrand factor, type A domain"/>
    <property type="match status" value="1"/>
</dbReference>
<dbReference type="InterPro" id="IPR029307">
    <property type="entry name" value="INT_SG_DDX_CT_C"/>
</dbReference>
<dbReference type="InterPro" id="IPR051113">
    <property type="entry name" value="Integrator_subunit6"/>
</dbReference>
<dbReference type="InterPro" id="IPR002035">
    <property type="entry name" value="VWF_A"/>
</dbReference>
<dbReference type="InterPro" id="IPR036465">
    <property type="entry name" value="vWFA_dom_sf"/>
</dbReference>
<dbReference type="PANTHER" id="PTHR12957">
    <property type="entry name" value="DEAD/H BOX POLYPEPTIDE 26/DICE1-RELATED"/>
    <property type="match status" value="1"/>
</dbReference>
<dbReference type="PANTHER" id="PTHR12957:SF22">
    <property type="entry name" value="INTEGRATOR COMPLEX SUBUNIT 6-LIKE"/>
    <property type="match status" value="1"/>
</dbReference>
<dbReference type="Pfam" id="PF25462">
    <property type="entry name" value="Beta-barrel_INTS6"/>
    <property type="match status" value="1"/>
</dbReference>
<dbReference type="Pfam" id="PF15300">
    <property type="entry name" value="INT_SG_DDX_CT_C"/>
    <property type="match status" value="1"/>
</dbReference>
<dbReference type="Pfam" id="PF13519">
    <property type="entry name" value="VWA_2"/>
    <property type="match status" value="1"/>
</dbReference>
<dbReference type="SUPFAM" id="SSF53300">
    <property type="entry name" value="vWA-like"/>
    <property type="match status" value="1"/>
</dbReference>
<dbReference type="PROSITE" id="PS50234">
    <property type="entry name" value="VWFA"/>
    <property type="match status" value="1"/>
</dbReference>
<name>INT6_DANRE</name>
<keyword id="KW-0158">Chromosome</keyword>
<keyword id="KW-0539">Nucleus</keyword>
<keyword id="KW-1185">Reference proteome</keyword>
<reference key="1">
    <citation type="submission" date="2003-07" db="EMBL/GenBank/DDBJ databases">
        <authorList>
            <consortium name="NIH - Zebrafish Gene Collection (ZGC) project"/>
        </authorList>
    </citation>
    <scope>NUCLEOTIDE SEQUENCE [LARGE SCALE MRNA]</scope>
    <source>
        <strain>AB</strain>
    </source>
</reference>